<evidence type="ECO:0000255" key="1">
    <source>
        <dbReference type="HAMAP-Rule" id="MF_01106"/>
    </source>
</evidence>
<name>ARGJ_STAS1</name>
<dbReference type="EC" id="2.3.1.35" evidence="1"/>
<dbReference type="EC" id="2.3.1.1" evidence="1"/>
<dbReference type="EMBL" id="AP008934">
    <property type="protein sequence ID" value="BAE17367.1"/>
    <property type="molecule type" value="Genomic_DNA"/>
</dbReference>
<dbReference type="RefSeq" id="WP_011302213.1">
    <property type="nucleotide sequence ID" value="NZ_MTGA01000037.1"/>
</dbReference>
<dbReference type="SMR" id="Q4A0N0"/>
<dbReference type="MEROPS" id="T05.002"/>
<dbReference type="GeneID" id="3617140"/>
<dbReference type="KEGG" id="ssp:SSP0222"/>
<dbReference type="PATRIC" id="fig|342451.11.peg.227"/>
<dbReference type="eggNOG" id="COG1364">
    <property type="taxonomic scope" value="Bacteria"/>
</dbReference>
<dbReference type="HOGENOM" id="CLU_027172_1_0_9"/>
<dbReference type="OrthoDB" id="9804242at2"/>
<dbReference type="UniPathway" id="UPA00068">
    <property type="reaction ID" value="UER00106"/>
</dbReference>
<dbReference type="UniPathway" id="UPA00068">
    <property type="reaction ID" value="UER00111"/>
</dbReference>
<dbReference type="Proteomes" id="UP000006371">
    <property type="component" value="Chromosome"/>
</dbReference>
<dbReference type="GO" id="GO:0005737">
    <property type="term" value="C:cytoplasm"/>
    <property type="evidence" value="ECO:0007669"/>
    <property type="project" value="UniProtKB-SubCell"/>
</dbReference>
<dbReference type="GO" id="GO:0004358">
    <property type="term" value="F:glutamate N-acetyltransferase activity"/>
    <property type="evidence" value="ECO:0007669"/>
    <property type="project" value="UniProtKB-UniRule"/>
</dbReference>
<dbReference type="GO" id="GO:0004042">
    <property type="term" value="F:L-glutamate N-acetyltransferase activity"/>
    <property type="evidence" value="ECO:0007669"/>
    <property type="project" value="UniProtKB-UniRule"/>
</dbReference>
<dbReference type="GO" id="GO:0006526">
    <property type="term" value="P:L-arginine biosynthetic process"/>
    <property type="evidence" value="ECO:0007669"/>
    <property type="project" value="UniProtKB-UniRule"/>
</dbReference>
<dbReference type="GO" id="GO:0006592">
    <property type="term" value="P:ornithine biosynthetic process"/>
    <property type="evidence" value="ECO:0007669"/>
    <property type="project" value="TreeGrafter"/>
</dbReference>
<dbReference type="CDD" id="cd02152">
    <property type="entry name" value="OAT"/>
    <property type="match status" value="1"/>
</dbReference>
<dbReference type="FunFam" id="3.10.20.340:FF:000001">
    <property type="entry name" value="Arginine biosynthesis bifunctional protein ArgJ, chloroplastic"/>
    <property type="match status" value="1"/>
</dbReference>
<dbReference type="FunFam" id="3.60.70.12:FF:000001">
    <property type="entry name" value="Arginine biosynthesis bifunctional protein ArgJ, chloroplastic"/>
    <property type="match status" value="1"/>
</dbReference>
<dbReference type="FunFam" id="3.30.2330.10:FF:000001">
    <property type="entry name" value="Arginine biosynthesis bifunctional protein ArgJ, mitochondrial"/>
    <property type="match status" value="1"/>
</dbReference>
<dbReference type="Gene3D" id="3.30.2330.10">
    <property type="entry name" value="arginine biosynthesis bifunctional protein suprefamily"/>
    <property type="match status" value="1"/>
</dbReference>
<dbReference type="Gene3D" id="3.10.20.340">
    <property type="entry name" value="ArgJ beta chain, C-terminal domain"/>
    <property type="match status" value="1"/>
</dbReference>
<dbReference type="Gene3D" id="3.60.70.12">
    <property type="entry name" value="L-amino peptidase D-ALA esterase/amidase"/>
    <property type="match status" value="1"/>
</dbReference>
<dbReference type="HAMAP" id="MF_01106">
    <property type="entry name" value="ArgJ"/>
    <property type="match status" value="1"/>
</dbReference>
<dbReference type="InterPro" id="IPR002813">
    <property type="entry name" value="Arg_biosynth_ArgJ"/>
</dbReference>
<dbReference type="InterPro" id="IPR016117">
    <property type="entry name" value="ArgJ-like_dom_sf"/>
</dbReference>
<dbReference type="InterPro" id="IPR042195">
    <property type="entry name" value="ArgJ_beta_C"/>
</dbReference>
<dbReference type="NCBIfam" id="TIGR00120">
    <property type="entry name" value="ArgJ"/>
    <property type="match status" value="1"/>
</dbReference>
<dbReference type="NCBIfam" id="NF003802">
    <property type="entry name" value="PRK05388.1"/>
    <property type="match status" value="1"/>
</dbReference>
<dbReference type="PANTHER" id="PTHR23100">
    <property type="entry name" value="ARGININE BIOSYNTHESIS BIFUNCTIONAL PROTEIN ARGJ"/>
    <property type="match status" value="1"/>
</dbReference>
<dbReference type="PANTHER" id="PTHR23100:SF0">
    <property type="entry name" value="ARGININE BIOSYNTHESIS BIFUNCTIONAL PROTEIN ARGJ, MITOCHONDRIAL"/>
    <property type="match status" value="1"/>
</dbReference>
<dbReference type="Pfam" id="PF01960">
    <property type="entry name" value="ArgJ"/>
    <property type="match status" value="1"/>
</dbReference>
<dbReference type="SUPFAM" id="SSF56266">
    <property type="entry name" value="DmpA/ArgJ-like"/>
    <property type="match status" value="1"/>
</dbReference>
<gene>
    <name evidence="1" type="primary">argJ</name>
    <name type="ordered locus">SSP0222</name>
</gene>
<sequence>MRDIETIDTLNQLNIDLQGDVSSPLGFIAGGLHCGLRRKKVDFGWIYSTTPATATGVYTLNQFKAAPLKLTEDSINKDKALQAIIVNSAIANACTGEKGMQDALDTQAWIAEQLNIEQHLVGVASTGVIGSFLPMDKIQYATQHVLKEQYNKSEAFNQAILTTDTMTKHLSVKVEIDGTTVTIGGTAKGSGMIHPNMATMLGFITTDANIDANTLDYCLKQSIDQSFNMITVDGDSSTNDMVLCMANGQAQHTQIDALHPEWHKFVYALNFVCHYLAKSIAKDGEGATKLVTVKVKGAHDVVEARKIAKSIVSSNLVKTAVHGEDANFGRIVTAIGYASRYIEPSATHVSLCQVSVLEKGMAVDFDEQRLKEELASDNILIEATVGNGEGEAAAYGCDLSYEYVRINASYRT</sequence>
<feature type="chain" id="PRO_0000042894" description="Arginine biosynthesis bifunctional protein ArgJ alpha chain" evidence="1">
    <location>
        <begin position="1"/>
        <end position="198"/>
    </location>
</feature>
<feature type="chain" id="PRO_0000042895" description="Arginine biosynthesis bifunctional protein ArgJ beta chain" evidence="1">
    <location>
        <begin position="199"/>
        <end position="412"/>
    </location>
</feature>
<feature type="active site" description="Nucleophile" evidence="1">
    <location>
        <position position="199"/>
    </location>
</feature>
<feature type="binding site" evidence="1">
    <location>
        <position position="162"/>
    </location>
    <ligand>
        <name>substrate</name>
    </ligand>
</feature>
<feature type="binding site" evidence="1">
    <location>
        <position position="188"/>
    </location>
    <ligand>
        <name>substrate</name>
    </ligand>
</feature>
<feature type="binding site" evidence="1">
    <location>
        <position position="199"/>
    </location>
    <ligand>
        <name>substrate</name>
    </ligand>
</feature>
<feature type="binding site" evidence="1">
    <location>
        <position position="285"/>
    </location>
    <ligand>
        <name>substrate</name>
    </ligand>
</feature>
<feature type="binding site" evidence="1">
    <location>
        <position position="407"/>
    </location>
    <ligand>
        <name>substrate</name>
    </ligand>
</feature>
<feature type="binding site" evidence="1">
    <location>
        <position position="412"/>
    </location>
    <ligand>
        <name>substrate</name>
    </ligand>
</feature>
<feature type="site" description="Involved in the stabilization of negative charge on the oxyanion by the formation of the oxyanion hole" evidence="1">
    <location>
        <position position="126"/>
    </location>
</feature>
<feature type="site" description="Involved in the stabilization of negative charge on the oxyanion by the formation of the oxyanion hole" evidence="1">
    <location>
        <position position="127"/>
    </location>
</feature>
<feature type="site" description="Cleavage; by autolysis" evidence="1">
    <location>
        <begin position="198"/>
        <end position="199"/>
    </location>
</feature>
<comment type="function">
    <text evidence="1">Catalyzes two activities which are involved in the cyclic version of arginine biosynthesis: the synthesis of N-acetylglutamate from glutamate and acetyl-CoA as the acetyl donor, and of ornithine by transacetylation between N(2)-acetylornithine and glutamate.</text>
</comment>
<comment type="catalytic activity">
    <reaction evidence="1">
        <text>N(2)-acetyl-L-ornithine + L-glutamate = N-acetyl-L-glutamate + L-ornithine</text>
        <dbReference type="Rhea" id="RHEA:15349"/>
        <dbReference type="ChEBI" id="CHEBI:29985"/>
        <dbReference type="ChEBI" id="CHEBI:44337"/>
        <dbReference type="ChEBI" id="CHEBI:46911"/>
        <dbReference type="ChEBI" id="CHEBI:57805"/>
        <dbReference type="EC" id="2.3.1.35"/>
    </reaction>
</comment>
<comment type="catalytic activity">
    <reaction evidence="1">
        <text>L-glutamate + acetyl-CoA = N-acetyl-L-glutamate + CoA + H(+)</text>
        <dbReference type="Rhea" id="RHEA:24292"/>
        <dbReference type="ChEBI" id="CHEBI:15378"/>
        <dbReference type="ChEBI" id="CHEBI:29985"/>
        <dbReference type="ChEBI" id="CHEBI:44337"/>
        <dbReference type="ChEBI" id="CHEBI:57287"/>
        <dbReference type="ChEBI" id="CHEBI:57288"/>
        <dbReference type="EC" id="2.3.1.1"/>
    </reaction>
</comment>
<comment type="pathway">
    <text evidence="1">Amino-acid biosynthesis; L-arginine biosynthesis; L-ornithine and N-acetyl-L-glutamate from L-glutamate and N(2)-acetyl-L-ornithine (cyclic): step 1/1.</text>
</comment>
<comment type="pathway">
    <text evidence="1">Amino-acid biosynthesis; L-arginine biosynthesis; N(2)-acetyl-L-ornithine from L-glutamate: step 1/4.</text>
</comment>
<comment type="subunit">
    <text evidence="1">Heterotetramer of two alpha and two beta chains.</text>
</comment>
<comment type="subcellular location">
    <subcellularLocation>
        <location evidence="1">Cytoplasm</location>
    </subcellularLocation>
</comment>
<comment type="similarity">
    <text evidence="1">Belongs to the ArgJ family.</text>
</comment>
<protein>
    <recommendedName>
        <fullName evidence="1">Arginine biosynthesis bifunctional protein ArgJ</fullName>
    </recommendedName>
    <domain>
        <recommendedName>
            <fullName evidence="1">Glutamate N-acetyltransferase</fullName>
            <ecNumber evidence="1">2.3.1.35</ecNumber>
        </recommendedName>
        <alternativeName>
            <fullName evidence="1">Ornithine acetyltransferase</fullName>
            <shortName evidence="1">OATase</shortName>
        </alternativeName>
        <alternativeName>
            <fullName evidence="1">Ornithine transacetylase</fullName>
        </alternativeName>
    </domain>
    <domain>
        <recommendedName>
            <fullName evidence="1">Amino-acid acetyltransferase</fullName>
            <ecNumber evidence="1">2.3.1.1</ecNumber>
        </recommendedName>
        <alternativeName>
            <fullName evidence="1">N-acetylglutamate synthase</fullName>
            <shortName evidence="1">AGSase</shortName>
        </alternativeName>
    </domain>
    <component>
        <recommendedName>
            <fullName evidence="1">Arginine biosynthesis bifunctional protein ArgJ alpha chain</fullName>
        </recommendedName>
    </component>
    <component>
        <recommendedName>
            <fullName evidence="1">Arginine biosynthesis bifunctional protein ArgJ beta chain</fullName>
        </recommendedName>
    </component>
</protein>
<reference key="1">
    <citation type="journal article" date="2005" name="Proc. Natl. Acad. Sci. U.S.A.">
        <title>Whole genome sequence of Staphylococcus saprophyticus reveals the pathogenesis of uncomplicated urinary tract infection.</title>
        <authorList>
            <person name="Kuroda M."/>
            <person name="Yamashita A."/>
            <person name="Hirakawa H."/>
            <person name="Kumano M."/>
            <person name="Morikawa K."/>
            <person name="Higashide M."/>
            <person name="Maruyama A."/>
            <person name="Inose Y."/>
            <person name="Matoba K."/>
            <person name="Toh H."/>
            <person name="Kuhara S."/>
            <person name="Hattori M."/>
            <person name="Ohta T."/>
        </authorList>
    </citation>
    <scope>NUCLEOTIDE SEQUENCE [LARGE SCALE GENOMIC DNA]</scope>
    <source>
        <strain>ATCC 15305 / DSM 20229 / NCIMB 8711 / NCTC 7292 / S-41</strain>
    </source>
</reference>
<proteinExistence type="inferred from homology"/>
<accession>Q4A0N0</accession>
<organism>
    <name type="scientific">Staphylococcus saprophyticus subsp. saprophyticus (strain ATCC 15305 / DSM 20229 / NCIMB 8711 / NCTC 7292 / S-41)</name>
    <dbReference type="NCBI Taxonomy" id="342451"/>
    <lineage>
        <taxon>Bacteria</taxon>
        <taxon>Bacillati</taxon>
        <taxon>Bacillota</taxon>
        <taxon>Bacilli</taxon>
        <taxon>Bacillales</taxon>
        <taxon>Staphylococcaceae</taxon>
        <taxon>Staphylococcus</taxon>
    </lineage>
</organism>
<keyword id="KW-0012">Acyltransferase</keyword>
<keyword id="KW-0028">Amino-acid biosynthesis</keyword>
<keyword id="KW-0055">Arginine biosynthesis</keyword>
<keyword id="KW-0068">Autocatalytic cleavage</keyword>
<keyword id="KW-0963">Cytoplasm</keyword>
<keyword id="KW-0511">Multifunctional enzyme</keyword>
<keyword id="KW-1185">Reference proteome</keyword>
<keyword id="KW-0808">Transferase</keyword>